<organism>
    <name type="scientific">Saccharomyces cerevisiae (strain ATCC 204508 / S288c)</name>
    <name type="common">Baker's yeast</name>
    <dbReference type="NCBI Taxonomy" id="559292"/>
    <lineage>
        <taxon>Eukaryota</taxon>
        <taxon>Fungi</taxon>
        <taxon>Dikarya</taxon>
        <taxon>Ascomycota</taxon>
        <taxon>Saccharomycotina</taxon>
        <taxon>Saccharomycetes</taxon>
        <taxon>Saccharomycetales</taxon>
        <taxon>Saccharomycetaceae</taxon>
        <taxon>Saccharomyces</taxon>
    </lineage>
</organism>
<comment type="function">
    <text>Required for V-ATPase activity.</text>
</comment>
<comment type="alternative products">
    <event type="alternative initiation"/>
    <isoform>
        <id>P38784-1</id>
        <name>1</name>
        <sequence type="displayed"/>
    </isoform>
    <isoform>
        <id>P38784-2</id>
        <name>2</name>
        <sequence type="described" ref="VSP_058123"/>
    </isoform>
</comment>
<comment type="miscellaneous">
    <text evidence="2">Present with 752 molecules/cell in log phase SD medium.</text>
</comment>
<evidence type="ECO:0000256" key="1">
    <source>
        <dbReference type="SAM" id="MobiDB-lite"/>
    </source>
</evidence>
<evidence type="ECO:0000269" key="2">
    <source>
    </source>
</evidence>
<evidence type="ECO:0000305" key="3"/>
<evidence type="ECO:0007744" key="4">
    <source>
    </source>
</evidence>
<evidence type="ECO:0007829" key="5">
    <source>
        <dbReference type="PDB" id="8EAS"/>
    </source>
</evidence>
<evidence type="ECO:0007829" key="6">
    <source>
        <dbReference type="PDB" id="8EAT"/>
    </source>
</evidence>
<gene>
    <name type="primary">VMA22</name>
    <name type="ordered locus">YHR060W</name>
</gene>
<accession>P38784</accession>
<accession>D3DL09</accession>
<keyword id="KW-0002">3D-structure</keyword>
<keyword id="KW-0007">Acetylation</keyword>
<keyword id="KW-0024">Alternative initiation</keyword>
<keyword id="KW-1185">Reference proteome</keyword>
<dbReference type="EMBL" id="U24501">
    <property type="protein sequence ID" value="AAA87458.1"/>
    <property type="molecule type" value="Genomic_DNA"/>
</dbReference>
<dbReference type="EMBL" id="U00061">
    <property type="protein sequence ID" value="AAB68380.1"/>
    <property type="molecule type" value="Genomic_DNA"/>
</dbReference>
<dbReference type="EMBL" id="BK006934">
    <property type="protein sequence ID" value="DAA06753.1"/>
    <property type="molecule type" value="Genomic_DNA"/>
</dbReference>
<dbReference type="PIR" id="S46701">
    <property type="entry name" value="S46701"/>
</dbReference>
<dbReference type="RefSeq" id="NP_011927.1">
    <molecule id="P38784-1"/>
    <property type="nucleotide sequence ID" value="NM_001179190.1"/>
</dbReference>
<dbReference type="PDB" id="8EAS">
    <property type="method" value="EM"/>
    <property type="resolution" value="2.60 A"/>
    <property type="chains" value="A=1-181"/>
</dbReference>
<dbReference type="PDB" id="8EAT">
    <property type="method" value="EM"/>
    <property type="resolution" value="3.10 A"/>
    <property type="chains" value="A=1-181"/>
</dbReference>
<dbReference type="PDBsum" id="8EAS"/>
<dbReference type="PDBsum" id="8EAT"/>
<dbReference type="EMDB" id="EMD-27984"/>
<dbReference type="EMDB" id="EMD-27985"/>
<dbReference type="SMR" id="P38784"/>
<dbReference type="BioGRID" id="36492">
    <property type="interactions" value="120"/>
</dbReference>
<dbReference type="DIP" id="DIP-1736N"/>
<dbReference type="FunCoup" id="P38784">
    <property type="interactions" value="88"/>
</dbReference>
<dbReference type="IntAct" id="P38784">
    <property type="interactions" value="11"/>
</dbReference>
<dbReference type="MINT" id="P38784"/>
<dbReference type="STRING" id="4932.YHR060W"/>
<dbReference type="iPTMnet" id="P38784"/>
<dbReference type="PaxDb" id="4932-YHR060W"/>
<dbReference type="PeptideAtlas" id="P38784"/>
<dbReference type="EnsemblFungi" id="YHR060W_mRNA">
    <molecule id="P38784-1"/>
    <property type="protein sequence ID" value="YHR060W"/>
    <property type="gene ID" value="YHR060W"/>
</dbReference>
<dbReference type="GeneID" id="856457"/>
<dbReference type="KEGG" id="sce:YHR060W"/>
<dbReference type="AGR" id="SGD:S000001102"/>
<dbReference type="SGD" id="S000001102">
    <property type="gene designation" value="VMA22"/>
</dbReference>
<dbReference type="VEuPathDB" id="FungiDB:YHR060W"/>
<dbReference type="eggNOG" id="ENOG502S50X">
    <property type="taxonomic scope" value="Eukaryota"/>
</dbReference>
<dbReference type="HOGENOM" id="CLU_089394_0_0_1"/>
<dbReference type="InParanoid" id="P38784"/>
<dbReference type="OMA" id="RANYHNK"/>
<dbReference type="OrthoDB" id="4044452at2759"/>
<dbReference type="BioCyc" id="YEAST:G3O-31113-MONOMER"/>
<dbReference type="BioGRID-ORCS" id="856457">
    <property type="hits" value="4 hits in 10 CRISPR screens"/>
</dbReference>
<dbReference type="PRO" id="PR:P38784"/>
<dbReference type="Proteomes" id="UP000002311">
    <property type="component" value="Chromosome VIII"/>
</dbReference>
<dbReference type="RNAct" id="P38784">
    <property type="molecule type" value="protein"/>
</dbReference>
<dbReference type="GO" id="GO:0005634">
    <property type="term" value="C:nucleus"/>
    <property type="evidence" value="ECO:0007005"/>
    <property type="project" value="SGD"/>
</dbReference>
<dbReference type="GO" id="GO:1990871">
    <property type="term" value="C:Vma12-Vma22 assembly complex"/>
    <property type="evidence" value="ECO:0000353"/>
    <property type="project" value="SGD"/>
</dbReference>
<dbReference type="GO" id="GO:0051082">
    <property type="term" value="F:unfolded protein binding"/>
    <property type="evidence" value="ECO:0000315"/>
    <property type="project" value="SGD"/>
</dbReference>
<dbReference type="GO" id="GO:0007035">
    <property type="term" value="P:vacuolar acidification"/>
    <property type="evidence" value="ECO:0000315"/>
    <property type="project" value="SGD"/>
</dbReference>
<dbReference type="GO" id="GO:0070072">
    <property type="term" value="P:vacuolar proton-transporting V-type ATPase complex assembly"/>
    <property type="evidence" value="ECO:0000315"/>
    <property type="project" value="SGD"/>
</dbReference>
<dbReference type="InterPro" id="IPR040357">
    <property type="entry name" value="Vma22/CCDC115"/>
</dbReference>
<dbReference type="PANTHER" id="PTHR31996">
    <property type="entry name" value="COILED-COIL DOMAIN-CONTAINING PROTEIN 115"/>
    <property type="match status" value="1"/>
</dbReference>
<dbReference type="PANTHER" id="PTHR31996:SF2">
    <property type="entry name" value="COILED-COIL DOMAIN-CONTAINING PROTEIN 115"/>
    <property type="match status" value="1"/>
</dbReference>
<dbReference type="Pfam" id="PF21730">
    <property type="entry name" value="Vma22_CCDC115"/>
    <property type="match status" value="1"/>
</dbReference>
<reference key="1">
    <citation type="journal article" date="1995" name="J. Biol. Chem.">
        <title>Vma22p is a novel endoplasmic reticulum-associated protein required for assembly of the yeast vacuolar H(+)-ATPase complex.</title>
        <authorList>
            <person name="Hill K.J."/>
            <person name="Stevens T.H."/>
        </authorList>
    </citation>
    <scope>NUCLEOTIDE SEQUENCE [GENOMIC DNA]</scope>
</reference>
<reference key="2">
    <citation type="journal article" date="1994" name="Science">
        <title>Complete nucleotide sequence of Saccharomyces cerevisiae chromosome VIII.</title>
        <authorList>
            <person name="Johnston M."/>
            <person name="Andrews S."/>
            <person name="Brinkman R."/>
            <person name="Cooper J."/>
            <person name="Ding H."/>
            <person name="Dover J."/>
            <person name="Du Z."/>
            <person name="Favello A."/>
            <person name="Fulton L."/>
            <person name="Gattung S."/>
            <person name="Geisel C."/>
            <person name="Kirsten J."/>
            <person name="Kucaba T."/>
            <person name="Hillier L.W."/>
            <person name="Jier M."/>
            <person name="Johnston L."/>
            <person name="Langston Y."/>
            <person name="Latreille P."/>
            <person name="Louis E.J."/>
            <person name="Macri C."/>
            <person name="Mardis E."/>
            <person name="Menezes S."/>
            <person name="Mouser L."/>
            <person name="Nhan M."/>
            <person name="Rifkin L."/>
            <person name="Riles L."/>
            <person name="St Peter H."/>
            <person name="Trevaskis E."/>
            <person name="Vaughan K."/>
            <person name="Vignati D."/>
            <person name="Wilcox L."/>
            <person name="Wohldman P."/>
            <person name="Waterston R."/>
            <person name="Wilson R."/>
            <person name="Vaudin M."/>
        </authorList>
    </citation>
    <scope>NUCLEOTIDE SEQUENCE [LARGE SCALE GENOMIC DNA]</scope>
    <source>
        <strain>ATCC 204508 / S288c</strain>
    </source>
</reference>
<reference key="3">
    <citation type="journal article" date="2014" name="G3 (Bethesda)">
        <title>The reference genome sequence of Saccharomyces cerevisiae: Then and now.</title>
        <authorList>
            <person name="Engel S.R."/>
            <person name="Dietrich F.S."/>
            <person name="Fisk D.G."/>
            <person name="Binkley G."/>
            <person name="Balakrishnan R."/>
            <person name="Costanzo M.C."/>
            <person name="Dwight S.S."/>
            <person name="Hitz B.C."/>
            <person name="Karra K."/>
            <person name="Nash R.S."/>
            <person name="Weng S."/>
            <person name="Wong E.D."/>
            <person name="Lloyd P."/>
            <person name="Skrzypek M.S."/>
            <person name="Miyasato S.R."/>
            <person name="Simison M."/>
            <person name="Cherry J.M."/>
        </authorList>
    </citation>
    <scope>GENOME REANNOTATION</scope>
    <source>
        <strain>ATCC 204508 / S288c</strain>
    </source>
</reference>
<reference key="4">
    <citation type="journal article" date="2003" name="Nature">
        <title>Global analysis of protein expression in yeast.</title>
        <authorList>
            <person name="Ghaemmaghami S."/>
            <person name="Huh W.-K."/>
            <person name="Bower K."/>
            <person name="Howson R.W."/>
            <person name="Belle A."/>
            <person name="Dephoure N."/>
            <person name="O'Shea E.K."/>
            <person name="Weissman J.S."/>
        </authorList>
    </citation>
    <scope>LEVEL OF PROTEIN EXPRESSION [LARGE SCALE ANALYSIS]</scope>
</reference>
<reference key="5">
    <citation type="journal article" date="2012" name="Proc. Natl. Acad. Sci. U.S.A.">
        <title>N-terminal acetylome analyses and functional insights of the N-terminal acetyltransferase NatB.</title>
        <authorList>
            <person name="Van Damme P."/>
            <person name="Lasa M."/>
            <person name="Polevoda B."/>
            <person name="Gazquez C."/>
            <person name="Elosegui-Artola A."/>
            <person name="Kim D.S."/>
            <person name="De Juan-Pardo E."/>
            <person name="Demeyer K."/>
            <person name="Hole K."/>
            <person name="Larrea E."/>
            <person name="Timmerman E."/>
            <person name="Prieto J."/>
            <person name="Arnesen T."/>
            <person name="Sherman F."/>
            <person name="Gevaert K."/>
            <person name="Aldabe R."/>
        </authorList>
    </citation>
    <scope>ACETYLATION [LARGE SCALE ANALYSIS] AT ALA-2 (ISOFORM 2)</scope>
    <scope>CLEAVAGE OF INITIATOR METHIONINE [LARGE SCALE ANALYSIS] (ISOFORM 2)</scope>
    <scope>IDENTIFICATION BY MASS SPECTROMETRY [LARGE SCALE ANALYSIS]</scope>
</reference>
<protein>
    <recommendedName>
        <fullName>Vacuolar ATPase assembly protein VMA22</fullName>
    </recommendedName>
</protein>
<name>VMA22_YEAST</name>
<sequence length="181" mass="21078">MSETRMAQNMDTTDEQYLRLIELLSNYDSTLEQLQKGFQDGYIQLSRSNYYNKDSLRGNYGEDYWDETYIGQLMATVEEKNSKVVVEIVKRKAQDKQEKKEEEDNKLTQRKKGTKPEKQKTQSHKLKQDYDPILMFGGVLSVPSSLRQSQTSFKGCIPLIAQLINYKNEILTLVETLSEQE</sequence>
<proteinExistence type="evidence at protein level"/>
<feature type="chain" id="PRO_0000065876" description="Vacuolar ATPase assembly protein VMA22">
    <location>
        <begin position="1"/>
        <end position="181"/>
    </location>
</feature>
<feature type="region of interest" description="Disordered" evidence="1">
    <location>
        <begin position="93"/>
        <end position="125"/>
    </location>
</feature>
<feature type="compositionally biased region" description="Basic and acidic residues" evidence="1">
    <location>
        <begin position="93"/>
        <end position="107"/>
    </location>
</feature>
<feature type="compositionally biased region" description="Basic and acidic residues" evidence="1">
    <location>
        <begin position="114"/>
        <end position="125"/>
    </location>
</feature>
<feature type="splice variant" id="VSP_058123" description="In isoform 2." evidence="3">
    <location>
        <begin position="1"/>
        <end position="5"/>
    </location>
</feature>
<feature type="helix" evidence="5">
    <location>
        <begin position="16"/>
        <end position="49"/>
    </location>
</feature>
<feature type="helix" evidence="6">
    <location>
        <begin position="52"/>
        <end position="54"/>
    </location>
</feature>
<feature type="strand" evidence="5">
    <location>
        <begin position="55"/>
        <end position="58"/>
    </location>
</feature>
<feature type="helix" evidence="5">
    <location>
        <begin position="62"/>
        <end position="64"/>
    </location>
</feature>
<feature type="strand" evidence="5">
    <location>
        <begin position="74"/>
        <end position="80"/>
    </location>
</feature>
<feature type="strand" evidence="5">
    <location>
        <begin position="83"/>
        <end position="90"/>
    </location>
</feature>
<feature type="helix" evidence="5">
    <location>
        <begin position="132"/>
        <end position="136"/>
    </location>
</feature>
<feature type="turn" evidence="5">
    <location>
        <begin position="137"/>
        <end position="140"/>
    </location>
</feature>
<feature type="helix" evidence="5">
    <location>
        <begin position="144"/>
        <end position="176"/>
    </location>
</feature>
<feature type="initiator methionine" description="Removed" evidence="4">
    <location sequence="P38784-2">
        <position position="1"/>
    </location>
</feature>
<feature type="modified residue" description="N-acetylalanine" evidence="4">
    <location sequence="P38784-2">
        <position position="2"/>
    </location>
</feature>